<keyword id="KW-0067">ATP-binding</keyword>
<keyword id="KW-0143">Chaperone</keyword>
<keyword id="KW-0963">Cytoplasm</keyword>
<keyword id="KW-0547">Nucleotide-binding</keyword>
<keyword id="KW-1185">Reference proteome</keyword>
<evidence type="ECO:0000255" key="1">
    <source>
        <dbReference type="HAMAP-Rule" id="MF_00249"/>
    </source>
</evidence>
<protein>
    <recommendedName>
        <fullName evidence="1">ATP-dependent protease ATPase subunit HslU</fullName>
    </recommendedName>
    <alternativeName>
        <fullName evidence="1">Unfoldase HslU</fullName>
    </alternativeName>
</protein>
<reference key="1">
    <citation type="journal article" date="2000" name="Nature">
        <title>Genome sequence of the endocellular bacterial symbiont of aphids Buchnera sp. APS.</title>
        <authorList>
            <person name="Shigenobu S."/>
            <person name="Watanabe H."/>
            <person name="Hattori M."/>
            <person name="Sakaki Y."/>
            <person name="Ishikawa H."/>
        </authorList>
    </citation>
    <scope>NUCLEOTIDE SEQUENCE [LARGE SCALE GENOMIC DNA]</scope>
    <source>
        <strain>APS</strain>
    </source>
</reference>
<comment type="function">
    <text evidence="1">ATPase subunit of a proteasome-like degradation complex; this subunit has chaperone activity. The binding of ATP and its subsequent hydrolysis by HslU are essential for unfolding of protein substrates subsequently hydrolyzed by HslV. HslU recognizes the N-terminal part of its protein substrates and unfolds these before they are guided to HslV for hydrolysis.</text>
</comment>
<comment type="subunit">
    <text evidence="1">A double ring-shaped homohexamer of HslV is capped on each side by a ring-shaped HslU homohexamer. The assembly of the HslU/HslV complex is dependent on binding of ATP.</text>
</comment>
<comment type="subcellular location">
    <subcellularLocation>
        <location evidence="1">Cytoplasm</location>
    </subcellularLocation>
</comment>
<comment type="similarity">
    <text evidence="1">Belongs to the ClpX chaperone family. HslU subfamily.</text>
</comment>
<name>HSLU_BUCAI</name>
<proteinExistence type="inferred from homology"/>
<dbReference type="EMBL" id="BA000003">
    <property type="protein sequence ID" value="BAB13268.1"/>
    <property type="molecule type" value="Genomic_DNA"/>
</dbReference>
<dbReference type="RefSeq" id="NP_240382.1">
    <property type="nucleotide sequence ID" value="NC_002528.1"/>
</dbReference>
<dbReference type="RefSeq" id="WP_010896172.1">
    <property type="nucleotide sequence ID" value="NZ_AP036055.1"/>
</dbReference>
<dbReference type="SMR" id="P57116"/>
<dbReference type="STRING" id="563178.BUAP5A_572"/>
<dbReference type="EnsemblBacteria" id="BAB13268">
    <property type="protein sequence ID" value="BAB13268"/>
    <property type="gene ID" value="BAB13268"/>
</dbReference>
<dbReference type="KEGG" id="buc:BU579"/>
<dbReference type="PATRIC" id="fig|107806.10.peg.584"/>
<dbReference type="eggNOG" id="COG1220">
    <property type="taxonomic scope" value="Bacteria"/>
</dbReference>
<dbReference type="HOGENOM" id="CLU_033123_0_0_6"/>
<dbReference type="Proteomes" id="UP000001806">
    <property type="component" value="Chromosome"/>
</dbReference>
<dbReference type="GO" id="GO:0009376">
    <property type="term" value="C:HslUV protease complex"/>
    <property type="evidence" value="ECO:0007669"/>
    <property type="project" value="UniProtKB-UniRule"/>
</dbReference>
<dbReference type="GO" id="GO:0005524">
    <property type="term" value="F:ATP binding"/>
    <property type="evidence" value="ECO:0007669"/>
    <property type="project" value="UniProtKB-UniRule"/>
</dbReference>
<dbReference type="GO" id="GO:0016887">
    <property type="term" value="F:ATP hydrolysis activity"/>
    <property type="evidence" value="ECO:0007669"/>
    <property type="project" value="InterPro"/>
</dbReference>
<dbReference type="GO" id="GO:0008233">
    <property type="term" value="F:peptidase activity"/>
    <property type="evidence" value="ECO:0007669"/>
    <property type="project" value="InterPro"/>
</dbReference>
<dbReference type="GO" id="GO:0036402">
    <property type="term" value="F:proteasome-activating activity"/>
    <property type="evidence" value="ECO:0007669"/>
    <property type="project" value="UniProtKB-UniRule"/>
</dbReference>
<dbReference type="GO" id="GO:0043335">
    <property type="term" value="P:protein unfolding"/>
    <property type="evidence" value="ECO:0007669"/>
    <property type="project" value="UniProtKB-UniRule"/>
</dbReference>
<dbReference type="GO" id="GO:0051603">
    <property type="term" value="P:proteolysis involved in protein catabolic process"/>
    <property type="evidence" value="ECO:0007669"/>
    <property type="project" value="TreeGrafter"/>
</dbReference>
<dbReference type="CDD" id="cd19498">
    <property type="entry name" value="RecA-like_HslU"/>
    <property type="match status" value="1"/>
</dbReference>
<dbReference type="FunFam" id="1.10.8.10:FF:000028">
    <property type="entry name" value="ATP-dependent protease ATPase subunit HslU"/>
    <property type="match status" value="1"/>
</dbReference>
<dbReference type="FunFam" id="3.40.50.300:FF:000213">
    <property type="entry name" value="ATP-dependent protease ATPase subunit HslU"/>
    <property type="match status" value="1"/>
</dbReference>
<dbReference type="FunFam" id="3.40.50.300:FF:000220">
    <property type="entry name" value="ATP-dependent protease ATPase subunit HslU"/>
    <property type="match status" value="1"/>
</dbReference>
<dbReference type="Gene3D" id="1.10.8.60">
    <property type="match status" value="1"/>
</dbReference>
<dbReference type="Gene3D" id="1.10.8.10">
    <property type="entry name" value="DNA helicase RuvA subunit, C-terminal domain"/>
    <property type="match status" value="2"/>
</dbReference>
<dbReference type="Gene3D" id="3.40.50.300">
    <property type="entry name" value="P-loop containing nucleotide triphosphate hydrolases"/>
    <property type="match status" value="1"/>
</dbReference>
<dbReference type="HAMAP" id="MF_00249">
    <property type="entry name" value="HslU"/>
    <property type="match status" value="1"/>
</dbReference>
<dbReference type="InterPro" id="IPR003593">
    <property type="entry name" value="AAA+_ATPase"/>
</dbReference>
<dbReference type="InterPro" id="IPR050052">
    <property type="entry name" value="ATP-dep_Clp_protease_ClpX"/>
</dbReference>
<dbReference type="InterPro" id="IPR003959">
    <property type="entry name" value="ATPase_AAA_core"/>
</dbReference>
<dbReference type="InterPro" id="IPR019489">
    <property type="entry name" value="Clp_ATPase_C"/>
</dbReference>
<dbReference type="InterPro" id="IPR004491">
    <property type="entry name" value="HslU"/>
</dbReference>
<dbReference type="InterPro" id="IPR027417">
    <property type="entry name" value="P-loop_NTPase"/>
</dbReference>
<dbReference type="NCBIfam" id="TIGR00390">
    <property type="entry name" value="hslU"/>
    <property type="match status" value="1"/>
</dbReference>
<dbReference type="NCBIfam" id="NF003544">
    <property type="entry name" value="PRK05201.1"/>
    <property type="match status" value="1"/>
</dbReference>
<dbReference type="PANTHER" id="PTHR48102">
    <property type="entry name" value="ATP-DEPENDENT CLP PROTEASE ATP-BINDING SUBUNIT CLPX-LIKE, MITOCHONDRIAL-RELATED"/>
    <property type="match status" value="1"/>
</dbReference>
<dbReference type="PANTHER" id="PTHR48102:SF3">
    <property type="entry name" value="ATP-DEPENDENT PROTEASE ATPASE SUBUNIT HSLU"/>
    <property type="match status" value="1"/>
</dbReference>
<dbReference type="Pfam" id="PF00004">
    <property type="entry name" value="AAA"/>
    <property type="match status" value="1"/>
</dbReference>
<dbReference type="Pfam" id="PF07724">
    <property type="entry name" value="AAA_2"/>
    <property type="match status" value="1"/>
</dbReference>
<dbReference type="SMART" id="SM00382">
    <property type="entry name" value="AAA"/>
    <property type="match status" value="1"/>
</dbReference>
<dbReference type="SMART" id="SM01086">
    <property type="entry name" value="ClpB_D2-small"/>
    <property type="match status" value="1"/>
</dbReference>
<dbReference type="SUPFAM" id="SSF52540">
    <property type="entry name" value="P-loop containing nucleoside triphosphate hydrolases"/>
    <property type="match status" value="1"/>
</dbReference>
<gene>
    <name evidence="1" type="primary">hslU</name>
    <name type="ordered locus">BU579</name>
</gene>
<sequence>MSEMTPPQIVSELDKFIIGQEKAKRAVSIALRNRWRRMQLNSELRYEVTPKNILMIGPTGVGKTEIARRLAKLADSPFIKVEATKFTEVGYVGKEVDSIIRDLTDAAIKMIRIKNIKKNKVRVEEIVEEKILDVLVPTPKKNWTESEKNESLAKTIQTFRKKLREGVLDEKEIEINILSTTMGVEIMAPPGMEELTNQLQSLFQNLGGHKKSSRRLKIKDAIVLLTEEEAAKLINQEEIKKEAINAVEQNGIVFIDEIDKICRRGDSSGPDISREGVQRDLLPLVEGCTVSTKHGMVKTDHILFIASGAFQTSTPSDLIPELQGRLPIKVELQALTIDDFEKILTEPTASITAQYKALMETEGVYINFTKEGIRNIAEAAWKVNESIENIGARRLHTVLEKLMEDISFNASDNKGNTIEINSNYVEEHLDQLTSNEDLGRFIL</sequence>
<feature type="chain" id="PRO_0000160486" description="ATP-dependent protease ATPase subunit HslU">
    <location>
        <begin position="1"/>
        <end position="443"/>
    </location>
</feature>
<feature type="binding site" evidence="1">
    <location>
        <position position="18"/>
    </location>
    <ligand>
        <name>ATP</name>
        <dbReference type="ChEBI" id="CHEBI:30616"/>
    </ligand>
</feature>
<feature type="binding site" evidence="1">
    <location>
        <begin position="60"/>
        <end position="65"/>
    </location>
    <ligand>
        <name>ATP</name>
        <dbReference type="ChEBI" id="CHEBI:30616"/>
    </ligand>
</feature>
<feature type="binding site" evidence="1">
    <location>
        <position position="256"/>
    </location>
    <ligand>
        <name>ATP</name>
        <dbReference type="ChEBI" id="CHEBI:30616"/>
    </ligand>
</feature>
<feature type="binding site" evidence="1">
    <location>
        <position position="321"/>
    </location>
    <ligand>
        <name>ATP</name>
        <dbReference type="ChEBI" id="CHEBI:30616"/>
    </ligand>
</feature>
<feature type="binding site" evidence="1">
    <location>
        <position position="393"/>
    </location>
    <ligand>
        <name>ATP</name>
        <dbReference type="ChEBI" id="CHEBI:30616"/>
    </ligand>
</feature>
<accession>P57116</accession>
<organism>
    <name type="scientific">Buchnera aphidicola subsp. Acyrthosiphon pisum (strain APS)</name>
    <name type="common">Acyrthosiphon pisum symbiotic bacterium</name>
    <dbReference type="NCBI Taxonomy" id="107806"/>
    <lineage>
        <taxon>Bacteria</taxon>
        <taxon>Pseudomonadati</taxon>
        <taxon>Pseudomonadota</taxon>
        <taxon>Gammaproteobacteria</taxon>
        <taxon>Enterobacterales</taxon>
        <taxon>Erwiniaceae</taxon>
        <taxon>Buchnera</taxon>
    </lineage>
</organism>